<sequence>MRNIGVFSVILFSFLAISLKAQNSNFVFKSFTPIDGLSQSSVIDIEQDKIGQLWVGTRDGLNKFDGHTFKIYRNNPEDSTSISNSDILSIAEDRSGMLWVGTYNGLNKYNPETNRFQRYFHSNESTSLPSNTIWKLKEIKNEIWIGTLNGLAIYNKKTEGFTSVLSDEKNKSSLPGLFVTSIFESTNGDIWVGTDNGLCKLISRNAEQISFQTINYKKNKDIRPYKLHVKDIIEDKNHNLWVATKNSGLYMIKANTTTLISYQNTPDFKDVNLDIRAINFDKHNNLWIGTYSGIFILKSDGDVQHIGKKSSDYSGLNKIKTIFTDKHGSVWAGSYYGGLHLWDESNSNFINFNQNSKSLRLSYNVVGSIAASKDSLVFFGTEGGGITQYNFKSDESIYINSENTKGFLSDNIKSLKIVDDALWVGSFNTLPFLYDYNTKTVRTNNFPDELKNIFIESSVYFTEKENDSIIWFGTFGSGAIRYNTETKNYIQLTTEPEGLYSLTNNRVRTLFIDSKQRVWLGTQSGLNVMALSNIDKEKIPIKQFFFDSELISGVDILTVFEDSNRNIWVGTKASGFYVYKGETFEKVDIQHNGVKVNSVHSVLEDAYKNLWLSSNQGLVKYNLNTKNITIYDQTDGLISNEYNDNSSLNFNNDTFYFGGPAGVVSFQPDQISLNNYNPQVILTDFRIKNESVPIGGDQAILTKDIAFTKAIDLDYNNANFSIRFAIPNFINGSNNQYAYRMLGLEEAWNVTSNTEANYIIQQAGNYTFEVKGANNDDVWNEQPTILNITVHPAPWRSWWAFCLYALCIGTALIALISFLKSKAKLKHKLALESIEKQRNEEINQAKLQFFTNISHEFRTPLTLILGPLQQVLLDYKGSNKVYKKLLVIENSANHLLQLINRLMDFRKLENSQFNLQAAEGNIVKFLKEIYFSFSEYAKNGNYTYTFESESDVINVYYDRSKLERVFYNLISNAFRYTPEGGNITLKITTDSKYIYIDINDSGVGISDEFKTKIFNRFFEVPIHNQPQKNYNKGSGIGLSIAKNIAELHKGTIRLVHKERPGTIFRVSLPLGRGHLQDSEIISDFKLSDDISQYEIQLETLPVLDEDSIEDLITEKEKSTILIVEDHKPLRVFIKNLLKHDYNILEAENGKIALKLAQQNLPSLIISDVIMPEMVGTELCSKIKEDIKTSHIPVVLLTSRSSLIYKFEGLESGADEYISKPFNVKEFRLRIKNILENRMRLKAKFSNAKHITPSEITISSIDEQLLKKAFKIVEDNMANEQFDVLAFSQELGVSRTTLFNKIKAWTNFTPNEFIQEIRLKRAAQLLETNKINISQISYQVGFKSPKYFSKCFQKKFNETPSQYQNRYSEQF</sequence>
<proteinExistence type="inferred from homology"/>
<dbReference type="EC" id="2.7.13.3" evidence="1"/>
<dbReference type="EMBL" id="HG315671">
    <property type="protein sequence ID" value="CDF79905.1"/>
    <property type="molecule type" value="Genomic_DNA"/>
</dbReference>
<dbReference type="RefSeq" id="WP_038530482.1">
    <property type="nucleotide sequence ID" value="NZ_HG315671.1"/>
</dbReference>
<dbReference type="SMR" id="T2KMF4"/>
<dbReference type="STRING" id="1347342.BN863_21930"/>
<dbReference type="PATRIC" id="fig|1347342.6.peg.2200"/>
<dbReference type="eggNOG" id="COG0745">
    <property type="taxonomic scope" value="Bacteria"/>
</dbReference>
<dbReference type="eggNOG" id="COG2205">
    <property type="taxonomic scope" value="Bacteria"/>
</dbReference>
<dbReference type="eggNOG" id="COG3292">
    <property type="taxonomic scope" value="Bacteria"/>
</dbReference>
<dbReference type="HOGENOM" id="CLU_000445_28_1_10"/>
<dbReference type="OrthoDB" id="1522078at2"/>
<dbReference type="Proteomes" id="UP000016160">
    <property type="component" value="Chromosome"/>
</dbReference>
<dbReference type="GO" id="GO:0009986">
    <property type="term" value="C:cell surface"/>
    <property type="evidence" value="ECO:0007669"/>
    <property type="project" value="UniProtKB-SubCell"/>
</dbReference>
<dbReference type="GO" id="GO:0016020">
    <property type="term" value="C:membrane"/>
    <property type="evidence" value="ECO:0007669"/>
    <property type="project" value="UniProtKB-SubCell"/>
</dbReference>
<dbReference type="GO" id="GO:0003700">
    <property type="term" value="F:DNA-binding transcription factor activity"/>
    <property type="evidence" value="ECO:0007669"/>
    <property type="project" value="InterPro"/>
</dbReference>
<dbReference type="GO" id="GO:0000155">
    <property type="term" value="F:phosphorelay sensor kinase activity"/>
    <property type="evidence" value="ECO:0007669"/>
    <property type="project" value="InterPro"/>
</dbReference>
<dbReference type="GO" id="GO:0043565">
    <property type="term" value="F:sequence-specific DNA binding"/>
    <property type="evidence" value="ECO:0007669"/>
    <property type="project" value="InterPro"/>
</dbReference>
<dbReference type="CDD" id="cd00082">
    <property type="entry name" value="HisKA"/>
    <property type="match status" value="1"/>
</dbReference>
<dbReference type="FunFam" id="3.30.565.10:FF:000006">
    <property type="entry name" value="Sensor histidine kinase WalK"/>
    <property type="match status" value="1"/>
</dbReference>
<dbReference type="FunFam" id="1.10.287.130:FF:000034">
    <property type="entry name" value="Two-component system sensor histidine kinase/response regulator"/>
    <property type="match status" value="1"/>
</dbReference>
<dbReference type="FunFam" id="2.60.40.10:FF:000791">
    <property type="entry name" value="Two-component system sensor histidine kinase/response regulator"/>
    <property type="match status" value="1"/>
</dbReference>
<dbReference type="Gene3D" id="1.10.287.130">
    <property type="match status" value="1"/>
</dbReference>
<dbReference type="Gene3D" id="3.40.50.2300">
    <property type="match status" value="1"/>
</dbReference>
<dbReference type="Gene3D" id="3.30.565.10">
    <property type="entry name" value="Histidine kinase-like ATPase, C-terminal domain"/>
    <property type="match status" value="1"/>
</dbReference>
<dbReference type="Gene3D" id="1.10.10.60">
    <property type="entry name" value="Homeodomain-like"/>
    <property type="match status" value="1"/>
</dbReference>
<dbReference type="Gene3D" id="2.60.40.10">
    <property type="entry name" value="Immunoglobulins"/>
    <property type="match status" value="1"/>
</dbReference>
<dbReference type="Gene3D" id="2.130.10.10">
    <property type="entry name" value="YVTN repeat-like/Quinoprotein amine dehydrogenase"/>
    <property type="match status" value="2"/>
</dbReference>
<dbReference type="InterPro" id="IPR011006">
    <property type="entry name" value="CheY-like_superfamily"/>
</dbReference>
<dbReference type="InterPro" id="IPR036890">
    <property type="entry name" value="HATPase_C_sf"/>
</dbReference>
<dbReference type="InterPro" id="IPR005467">
    <property type="entry name" value="His_kinase_dom"/>
</dbReference>
<dbReference type="InterPro" id="IPR003661">
    <property type="entry name" value="HisK_dim/P_dom"/>
</dbReference>
<dbReference type="InterPro" id="IPR036097">
    <property type="entry name" value="HisK_dim/P_sf"/>
</dbReference>
<dbReference type="InterPro" id="IPR009057">
    <property type="entry name" value="Homeodomain-like_sf"/>
</dbReference>
<dbReference type="InterPro" id="IPR018060">
    <property type="entry name" value="HTH_AraC"/>
</dbReference>
<dbReference type="InterPro" id="IPR018062">
    <property type="entry name" value="HTH_AraC-typ_CS"/>
</dbReference>
<dbReference type="InterPro" id="IPR013783">
    <property type="entry name" value="Ig-like_fold"/>
</dbReference>
<dbReference type="InterPro" id="IPR011047">
    <property type="entry name" value="Quinoprotein_ADH-like_sf"/>
</dbReference>
<dbReference type="InterPro" id="IPR011110">
    <property type="entry name" value="Reg_prop"/>
</dbReference>
<dbReference type="InterPro" id="IPR004358">
    <property type="entry name" value="Sig_transdc_His_kin-like_C"/>
</dbReference>
<dbReference type="InterPro" id="IPR001789">
    <property type="entry name" value="Sig_transdc_resp-reg_receiver"/>
</dbReference>
<dbReference type="InterPro" id="IPR015943">
    <property type="entry name" value="WD40/YVTN_repeat-like_dom_sf"/>
</dbReference>
<dbReference type="InterPro" id="IPR011123">
    <property type="entry name" value="Y_Y_Y"/>
</dbReference>
<dbReference type="PANTHER" id="PTHR43547:SF2">
    <property type="entry name" value="HYBRID SIGNAL TRANSDUCTION HISTIDINE KINASE C"/>
    <property type="match status" value="1"/>
</dbReference>
<dbReference type="PANTHER" id="PTHR43547">
    <property type="entry name" value="TWO-COMPONENT HISTIDINE KINASE"/>
    <property type="match status" value="1"/>
</dbReference>
<dbReference type="Pfam" id="PF02518">
    <property type="entry name" value="HATPase_c"/>
    <property type="match status" value="1"/>
</dbReference>
<dbReference type="Pfam" id="PF00512">
    <property type="entry name" value="HisKA"/>
    <property type="match status" value="1"/>
</dbReference>
<dbReference type="Pfam" id="PF12833">
    <property type="entry name" value="HTH_18"/>
    <property type="match status" value="1"/>
</dbReference>
<dbReference type="Pfam" id="PF07494">
    <property type="entry name" value="Reg_prop"/>
    <property type="match status" value="4"/>
</dbReference>
<dbReference type="Pfam" id="PF00072">
    <property type="entry name" value="Response_reg"/>
    <property type="match status" value="1"/>
</dbReference>
<dbReference type="Pfam" id="PF07495">
    <property type="entry name" value="Y_Y_Y"/>
    <property type="match status" value="1"/>
</dbReference>
<dbReference type="PRINTS" id="PR00344">
    <property type="entry name" value="BCTRLSENSOR"/>
</dbReference>
<dbReference type="SMART" id="SM00387">
    <property type="entry name" value="HATPase_c"/>
    <property type="match status" value="1"/>
</dbReference>
<dbReference type="SMART" id="SM00388">
    <property type="entry name" value="HisKA"/>
    <property type="match status" value="1"/>
</dbReference>
<dbReference type="SMART" id="SM00342">
    <property type="entry name" value="HTH_ARAC"/>
    <property type="match status" value="1"/>
</dbReference>
<dbReference type="SMART" id="SM00448">
    <property type="entry name" value="REC"/>
    <property type="match status" value="1"/>
</dbReference>
<dbReference type="SUPFAM" id="SSF55874">
    <property type="entry name" value="ATPase domain of HSP90 chaperone/DNA topoisomerase II/histidine kinase"/>
    <property type="match status" value="1"/>
</dbReference>
<dbReference type="SUPFAM" id="SSF63829">
    <property type="entry name" value="Calcium-dependent phosphotriesterase"/>
    <property type="match status" value="1"/>
</dbReference>
<dbReference type="SUPFAM" id="SSF52172">
    <property type="entry name" value="CheY-like"/>
    <property type="match status" value="1"/>
</dbReference>
<dbReference type="SUPFAM" id="SSF46689">
    <property type="entry name" value="Homeodomain-like"/>
    <property type="match status" value="1"/>
</dbReference>
<dbReference type="SUPFAM" id="SSF47384">
    <property type="entry name" value="Homodimeric domain of signal transducing histidine kinase"/>
    <property type="match status" value="1"/>
</dbReference>
<dbReference type="SUPFAM" id="SSF50998">
    <property type="entry name" value="Quinoprotein alcohol dehydrogenase-like"/>
    <property type="match status" value="1"/>
</dbReference>
<dbReference type="PROSITE" id="PS50109">
    <property type="entry name" value="HIS_KIN"/>
    <property type="match status" value="1"/>
</dbReference>
<dbReference type="PROSITE" id="PS00041">
    <property type="entry name" value="HTH_ARAC_FAMILY_1"/>
    <property type="match status" value="1"/>
</dbReference>
<dbReference type="PROSITE" id="PS01124">
    <property type="entry name" value="HTH_ARAC_FAMILY_2"/>
    <property type="match status" value="1"/>
</dbReference>
<dbReference type="PROSITE" id="PS50110">
    <property type="entry name" value="RESPONSE_REGULATORY"/>
    <property type="match status" value="1"/>
</dbReference>
<feature type="signal peptide" evidence="2">
    <location>
        <begin position="1"/>
        <end position="20"/>
    </location>
</feature>
<feature type="chain" id="PRO_0000448297" description="Histidine kinase P4">
    <location>
        <begin position="21"/>
        <end position="1370"/>
    </location>
</feature>
<feature type="transmembrane region" description="Helical" evidence="2">
    <location>
        <begin position="799"/>
        <end position="819"/>
    </location>
</feature>
<feature type="domain" description="Histidine kinase" evidence="3">
    <location>
        <begin position="852"/>
        <end position="1072"/>
    </location>
</feature>
<feature type="domain" description="Response regulatory" evidence="4">
    <location>
        <begin position="1119"/>
        <end position="1234"/>
    </location>
</feature>
<feature type="domain" description="HTH araC/xylS-type" evidence="5">
    <location>
        <begin position="1266"/>
        <end position="1365"/>
    </location>
</feature>
<feature type="DNA-binding region" description="H-T-H motif" evidence="5">
    <location>
        <begin position="1284"/>
        <end position="1305"/>
    </location>
</feature>
<feature type="DNA-binding region" description="H-T-H motif" evidence="5">
    <location>
        <begin position="1332"/>
        <end position="1355"/>
    </location>
</feature>
<feature type="modified residue" description="Phosphohistidine; by autocatalysis" evidence="3">
    <location>
        <position position="855"/>
    </location>
</feature>
<feature type="modified residue" description="4-aspartylphosphate" evidence="4">
    <location>
        <position position="1167"/>
    </location>
</feature>
<name>PLH4_FORAG</name>
<gene>
    <name type="ORF">BN863_21930</name>
</gene>
<reference key="1">
    <citation type="journal article" date="2013" name="Appl. Environ. Microbiol.">
        <title>The genome of the alga-associated marine flavobacterium Formosa agariphila KMM 3901T reveals a broad potential for degradation of algal polysaccharides.</title>
        <authorList>
            <person name="Mann A.J."/>
            <person name="Hahnke R.L."/>
            <person name="Huang S."/>
            <person name="Werner J."/>
            <person name="Xing P."/>
            <person name="Barbeyron T."/>
            <person name="Huettel B."/>
            <person name="Stueber K."/>
            <person name="Reinhardt R."/>
            <person name="Harder J."/>
            <person name="Gloeckner F.O."/>
            <person name="Amann R.I."/>
            <person name="Teeling H."/>
        </authorList>
    </citation>
    <scope>NUCLEOTIDE SEQUENCE [LARGE SCALE GENOMIC DNA]</scope>
    <source>
        <strain>DSM 15362 / KCTC 12365 / LMG 23005 / KMM 3901 / M-2Alg 35-1</strain>
    </source>
</reference>
<reference key="2">
    <citation type="journal article" date="2019" name="Nat. Chem. Biol.">
        <title>A marine bacterial enzymatic cascade degrades the algal polysaccharide ulvan.</title>
        <authorList>
            <person name="Reisky L."/>
            <person name="Prechoux A."/>
            <person name="Zuehlke M.K."/>
            <person name="Baeumgen M."/>
            <person name="Robb C.S."/>
            <person name="Gerlach N."/>
            <person name="Roret T."/>
            <person name="Stanetty C."/>
            <person name="Larocque R."/>
            <person name="Michel G."/>
            <person name="Song T."/>
            <person name="Markert S."/>
            <person name="Unfried F."/>
            <person name="Mihovilovic M.D."/>
            <person name="Trautwein-Schult A."/>
            <person name="Becher D."/>
            <person name="Schweder T."/>
            <person name="Bornscheuer U.T."/>
            <person name="Hehemann J.H."/>
        </authorList>
    </citation>
    <scope>FUNCTION</scope>
    <scope>SUBCELLULAR LOCATION</scope>
</reference>
<keyword id="KW-0238">DNA-binding</keyword>
<keyword id="KW-0418">Kinase</keyword>
<keyword id="KW-0472">Membrane</keyword>
<keyword id="KW-0597">Phosphoprotein</keyword>
<keyword id="KW-1185">Reference proteome</keyword>
<keyword id="KW-0732">Signal</keyword>
<keyword id="KW-0804">Transcription</keyword>
<keyword id="KW-0805">Transcription regulation</keyword>
<keyword id="KW-0808">Transferase</keyword>
<keyword id="KW-0812">Transmembrane</keyword>
<keyword id="KW-1133">Transmembrane helix</keyword>
<comment type="function">
    <text evidence="9">Histidine kinase probably involved in ulvan degradation (Probable). Ulvan is the main polysaccharide component of the Ulvales (green seaweed) cell wall. It is composed of disaccharide building blocks comprising 3-sulfated rhamnose (Rha3S) linked to D-glucuronic acid (GlcA), L-iduronic acid (IduA), or D-xylose (Xyl) (Probable).</text>
</comment>
<comment type="catalytic activity">
    <reaction evidence="1">
        <text>ATP + protein L-histidine = ADP + protein N-phospho-L-histidine.</text>
        <dbReference type="EC" id="2.7.13.3"/>
    </reaction>
</comment>
<comment type="subcellular location">
    <subcellularLocation>
        <location evidence="2">Membrane</location>
        <topology evidence="2">Single-pass membrane protein</topology>
    </subcellularLocation>
    <subcellularLocation>
        <location evidence="6">Cell surface</location>
    </subcellularLocation>
</comment>
<comment type="PTM">
    <text evidence="8">Autophosphorylated. Activation requires a sequential transfer of a phosphate group from a His in the primary transmitter domain, to an Asp in the receiver domain and to a His in the secondary transmitter domain.</text>
</comment>
<evidence type="ECO:0000250" key="1">
    <source>
        <dbReference type="UniProtKB" id="Q8KIY1"/>
    </source>
</evidence>
<evidence type="ECO:0000255" key="2"/>
<evidence type="ECO:0000255" key="3">
    <source>
        <dbReference type="PROSITE-ProRule" id="PRU00107"/>
    </source>
</evidence>
<evidence type="ECO:0000255" key="4">
    <source>
        <dbReference type="PROSITE-ProRule" id="PRU00169"/>
    </source>
</evidence>
<evidence type="ECO:0000255" key="5">
    <source>
        <dbReference type="PROSITE-ProRule" id="PRU00593"/>
    </source>
</evidence>
<evidence type="ECO:0000269" key="6">
    <source>
    </source>
</evidence>
<evidence type="ECO:0000303" key="7">
    <source>
    </source>
</evidence>
<evidence type="ECO:0000305" key="8"/>
<evidence type="ECO:0000305" key="9">
    <source>
    </source>
</evidence>
<protein>
    <recommendedName>
        <fullName evidence="7">Histidine kinase P4</fullName>
        <shortName evidence="7">P4_HK</shortName>
        <ecNumber evidence="1">2.7.13.3</ecNumber>
    </recommendedName>
    <alternativeName>
        <fullName evidence="7">Polysaccharide utilization locus H protein P4</fullName>
        <shortName>PUL H protein P4</shortName>
    </alternativeName>
</protein>
<accession>T2KMF4</accession>
<organism>
    <name type="scientific">Formosa agariphila (strain DSM 15362 / KCTC 12365 / LMG 23005 / KMM 3901 / M-2Alg 35-1)</name>
    <dbReference type="NCBI Taxonomy" id="1347342"/>
    <lineage>
        <taxon>Bacteria</taxon>
        <taxon>Pseudomonadati</taxon>
        <taxon>Bacteroidota</taxon>
        <taxon>Flavobacteriia</taxon>
        <taxon>Flavobacteriales</taxon>
        <taxon>Flavobacteriaceae</taxon>
        <taxon>Formosa</taxon>
    </lineage>
</organism>